<protein>
    <recommendedName>
        <fullName evidence="1">UPF0301 protein YqgE</fullName>
    </recommendedName>
</protein>
<name>YQGE_ECO5E</name>
<sequence length="187" mass="20686">MNLQHHFLIAMPALQDPIFRRSVVYICEHNTNGAMGIIVNKPLENLKIEGILEKLKITPEPRDESIRLDKPVMLGGPLAEDRGFILHTPPSNFASSIRISDNTVMTTSRDVLETLGTDKQPSDVLVALGYASWEKGQLEQEILDNAWLTAPADLNILFKTPIADRWREAAKLIGVDILTMPGVAGHA</sequence>
<accession>B5YQE6</accession>
<feature type="chain" id="PRO_1000198271" description="UPF0301 protein YqgE">
    <location>
        <begin position="1"/>
        <end position="187"/>
    </location>
</feature>
<reference key="1">
    <citation type="journal article" date="2011" name="Proc. Natl. Acad. Sci. U.S.A.">
        <title>Genomic anatomy of Escherichia coli O157:H7 outbreaks.</title>
        <authorList>
            <person name="Eppinger M."/>
            <person name="Mammel M.K."/>
            <person name="Leclerc J.E."/>
            <person name="Ravel J."/>
            <person name="Cebula T.A."/>
        </authorList>
    </citation>
    <scope>NUCLEOTIDE SEQUENCE [LARGE SCALE GENOMIC DNA]</scope>
    <source>
        <strain>EC4115 / EHEC</strain>
    </source>
</reference>
<evidence type="ECO:0000255" key="1">
    <source>
        <dbReference type="HAMAP-Rule" id="MF_00758"/>
    </source>
</evidence>
<gene>
    <name evidence="1" type="primary">yqgE</name>
    <name type="ordered locus">ECH74115_4251</name>
</gene>
<comment type="similarity">
    <text evidence="1">Belongs to the UPF0301 (AlgH) family.</text>
</comment>
<proteinExistence type="inferred from homology"/>
<organism>
    <name type="scientific">Escherichia coli O157:H7 (strain EC4115 / EHEC)</name>
    <dbReference type="NCBI Taxonomy" id="444450"/>
    <lineage>
        <taxon>Bacteria</taxon>
        <taxon>Pseudomonadati</taxon>
        <taxon>Pseudomonadota</taxon>
        <taxon>Gammaproteobacteria</taxon>
        <taxon>Enterobacterales</taxon>
        <taxon>Enterobacteriaceae</taxon>
        <taxon>Escherichia</taxon>
    </lineage>
</organism>
<dbReference type="EMBL" id="CP001164">
    <property type="protein sequence ID" value="ACI36741.1"/>
    <property type="molecule type" value="Genomic_DNA"/>
</dbReference>
<dbReference type="RefSeq" id="WP_001053178.1">
    <property type="nucleotide sequence ID" value="NC_011353.1"/>
</dbReference>
<dbReference type="SMR" id="B5YQE6"/>
<dbReference type="KEGG" id="ecf:ECH74115_4251"/>
<dbReference type="HOGENOM" id="CLU_057596_1_0_6"/>
<dbReference type="GO" id="GO:0005829">
    <property type="term" value="C:cytosol"/>
    <property type="evidence" value="ECO:0007669"/>
    <property type="project" value="TreeGrafter"/>
</dbReference>
<dbReference type="FunFam" id="3.30.70.1300:FF:000001">
    <property type="entry name" value="UPF0301 protein YqgE"/>
    <property type="match status" value="1"/>
</dbReference>
<dbReference type="Gene3D" id="3.40.1740.10">
    <property type="entry name" value="VC0467-like"/>
    <property type="match status" value="1"/>
</dbReference>
<dbReference type="Gene3D" id="3.30.70.1300">
    <property type="entry name" value="VC0467-like domains"/>
    <property type="match status" value="1"/>
</dbReference>
<dbReference type="HAMAP" id="MF_00758">
    <property type="entry name" value="UPF0301"/>
    <property type="match status" value="1"/>
</dbReference>
<dbReference type="InterPro" id="IPR003774">
    <property type="entry name" value="AlgH-like"/>
</dbReference>
<dbReference type="NCBIfam" id="NF001266">
    <property type="entry name" value="PRK00228.1-1"/>
    <property type="match status" value="1"/>
</dbReference>
<dbReference type="PANTHER" id="PTHR30327">
    <property type="entry name" value="UNCHARACTERIZED PROTEIN YQGE"/>
    <property type="match status" value="1"/>
</dbReference>
<dbReference type="PANTHER" id="PTHR30327:SF1">
    <property type="entry name" value="UPF0301 PROTEIN YQGE"/>
    <property type="match status" value="1"/>
</dbReference>
<dbReference type="Pfam" id="PF02622">
    <property type="entry name" value="DUF179"/>
    <property type="match status" value="1"/>
</dbReference>
<dbReference type="SUPFAM" id="SSF143456">
    <property type="entry name" value="VC0467-like"/>
    <property type="match status" value="1"/>
</dbReference>